<proteinExistence type="inferred from homology"/>
<feature type="chain" id="PRO_0000294667" description="ATP-dependent RNA helicase DBP10">
    <location>
        <begin position="1"/>
        <end position="914"/>
    </location>
</feature>
<feature type="domain" description="Helicase ATP-binding" evidence="2">
    <location>
        <begin position="130"/>
        <end position="302"/>
    </location>
</feature>
<feature type="domain" description="Helicase C-terminal" evidence="3">
    <location>
        <begin position="368"/>
        <end position="522"/>
    </location>
</feature>
<feature type="region of interest" description="Disordered" evidence="4">
    <location>
        <begin position="1"/>
        <end position="81"/>
    </location>
</feature>
<feature type="region of interest" description="Disordered" evidence="4">
    <location>
        <begin position="353"/>
        <end position="389"/>
    </location>
</feature>
<feature type="region of interest" description="Disordered" evidence="4">
    <location>
        <begin position="840"/>
        <end position="914"/>
    </location>
</feature>
<feature type="short sequence motif" description="Q motif">
    <location>
        <begin position="99"/>
        <end position="127"/>
    </location>
</feature>
<feature type="short sequence motif" description="DEAD box">
    <location>
        <begin position="250"/>
        <end position="253"/>
    </location>
</feature>
<feature type="compositionally biased region" description="Low complexity" evidence="4">
    <location>
        <begin position="12"/>
        <end position="25"/>
    </location>
</feature>
<feature type="compositionally biased region" description="Acidic residues" evidence="4">
    <location>
        <begin position="30"/>
        <end position="45"/>
    </location>
</feature>
<feature type="compositionally biased region" description="Basic and acidic residues" evidence="4">
    <location>
        <begin position="849"/>
        <end position="858"/>
    </location>
</feature>
<feature type="compositionally biased region" description="Basic and acidic residues" evidence="4">
    <location>
        <begin position="887"/>
        <end position="900"/>
    </location>
</feature>
<feature type="compositionally biased region" description="Basic residues" evidence="4">
    <location>
        <begin position="901"/>
        <end position="914"/>
    </location>
</feature>
<feature type="binding site" evidence="2">
    <location>
        <begin position="143"/>
        <end position="150"/>
    </location>
    <ligand>
        <name>ATP</name>
        <dbReference type="ChEBI" id="CHEBI:30616"/>
    </ligand>
</feature>
<sequence>MSDNEYDITNALALDAGSDSDSDVSSGREDVEDDIQDEIISDDEEKSSSSQNKKPKISTKPESFPSLELSDDEDDESRPSEVAEYFSNNKLQATKAKAGSFASFGLSKFLLKNIAKKGFKQPTPIQRKTIPLVMESRDVVGMARTGSGKTAAFVLPVVEKLKSHSPKVGVRAVILSPSRELALQTFKQVKEFTKGTDLRSIVLIGGDSLEDQFSSMMTNPDILVATPGRFLHLKVEMNLDLKTVEYIVFDEADRLFEMGFAEQLNELLVALPPSRQSLLFSATLPRSLVDFAKAGLSNPVLVRLDAETKISDQLQMAFFTTKRTERDANLLYILSEVIKMPLATQDQIKKLKELEEGADDDDSDEEKKPKKKKRKLEKPAPANRLPSEHSTIVFVPTKHHVEYVTTLLRDAGHLVSYIYGTLDQHARKQQLYQFRAAYTNILVVTDVAARGIDIPVLANVVNYTLPGSSKIFIHRVGRTARAGNKGWAYSIVNEKELPYLLDLELFLGKKVLLTQMHEKKVQICHEKGLSAPEVSYKDRLVLGSAPRVDIESSQELCDNLLRNHYELRTIRDVANKGEILYYRTRQPASQESVKRAKEIMDTGAWDDQHLLFGANLEKEKEKFLAKLADRKVKETVFEFRNKGQRDEDSLVEFMHKRRRQIAPIQRRAKERKQLLEKERMAGLTHGIENEILKGDGEVGYDNYNGADLDEVFEDGDEALSKKKRKTYRDPQFFLSHYAPASVIQDKQLELSSFSNEAAAATYDLDNDDKTQTNKQIMRWDKKKGKYINSQSTDKKYIIGESGQKIPATYRSGRYEDWRKSRNAQPLRTGAEEVKSNGRFKHKKVAAPKMPDKFRDDYHKQKKKVEKALDAGVSVKGYNRPGQQQELRSTEQIRKARELKEKRKAKNARPSKRRK</sequence>
<reference key="1">
    <citation type="journal article" date="2009" name="Nature">
        <title>Evolution of pathogenicity and sexual reproduction in eight Candida genomes.</title>
        <authorList>
            <person name="Butler G."/>
            <person name="Rasmussen M.D."/>
            <person name="Lin M.F."/>
            <person name="Santos M.A.S."/>
            <person name="Sakthikumar S."/>
            <person name="Munro C.A."/>
            <person name="Rheinbay E."/>
            <person name="Grabherr M."/>
            <person name="Forche A."/>
            <person name="Reedy J.L."/>
            <person name="Agrafioti I."/>
            <person name="Arnaud M.B."/>
            <person name="Bates S."/>
            <person name="Brown A.J.P."/>
            <person name="Brunke S."/>
            <person name="Costanzo M.C."/>
            <person name="Fitzpatrick D.A."/>
            <person name="de Groot P.W.J."/>
            <person name="Harris D."/>
            <person name="Hoyer L.L."/>
            <person name="Hube B."/>
            <person name="Klis F.M."/>
            <person name="Kodira C."/>
            <person name="Lennard N."/>
            <person name="Logue M.E."/>
            <person name="Martin R."/>
            <person name="Neiman A.M."/>
            <person name="Nikolaou E."/>
            <person name="Quail M.A."/>
            <person name="Quinn J."/>
            <person name="Santos M.C."/>
            <person name="Schmitzberger F.F."/>
            <person name="Sherlock G."/>
            <person name="Shah P."/>
            <person name="Silverstein K.A.T."/>
            <person name="Skrzypek M.S."/>
            <person name="Soll D."/>
            <person name="Staggs R."/>
            <person name="Stansfield I."/>
            <person name="Stumpf M.P.H."/>
            <person name="Sudbery P.E."/>
            <person name="Srikantha T."/>
            <person name="Zeng Q."/>
            <person name="Berman J."/>
            <person name="Berriman M."/>
            <person name="Heitman J."/>
            <person name="Gow N.A.R."/>
            <person name="Lorenz M.C."/>
            <person name="Birren B.W."/>
            <person name="Kellis M."/>
            <person name="Cuomo C.A."/>
        </authorList>
    </citation>
    <scope>NUCLEOTIDE SEQUENCE [LARGE SCALE GENOMIC DNA]</scope>
    <source>
        <strain>ATCC 6260 / CBS 566 / DSM 6381 / JCM 1539 / NBRC 10279 / NRRL Y-324</strain>
    </source>
</reference>
<protein>
    <recommendedName>
        <fullName>ATP-dependent RNA helicase DBP10</fullName>
        <ecNumber>3.6.4.13</ecNumber>
    </recommendedName>
</protein>
<dbReference type="EC" id="3.6.4.13"/>
<dbReference type="EMBL" id="CH408159">
    <property type="protein sequence ID" value="EDK40116.2"/>
    <property type="molecule type" value="Genomic_DNA"/>
</dbReference>
<dbReference type="RefSeq" id="XP_001483485.1">
    <property type="nucleotide sequence ID" value="XM_001483435.1"/>
</dbReference>
<dbReference type="SMR" id="A5DLR3"/>
<dbReference type="FunCoup" id="A5DLR3">
    <property type="interactions" value="1086"/>
</dbReference>
<dbReference type="STRING" id="294746.A5DLR3"/>
<dbReference type="GeneID" id="5125135"/>
<dbReference type="KEGG" id="pgu:PGUG_04214"/>
<dbReference type="eggNOG" id="KOG0337">
    <property type="taxonomic scope" value="Eukaryota"/>
</dbReference>
<dbReference type="HOGENOM" id="CLU_003041_5_1_1"/>
<dbReference type="InParanoid" id="A5DLR3"/>
<dbReference type="OMA" id="EDQFGMM"/>
<dbReference type="OrthoDB" id="10261375at2759"/>
<dbReference type="Proteomes" id="UP000001997">
    <property type="component" value="Unassembled WGS sequence"/>
</dbReference>
<dbReference type="GO" id="GO:0005829">
    <property type="term" value="C:cytosol"/>
    <property type="evidence" value="ECO:0007669"/>
    <property type="project" value="TreeGrafter"/>
</dbReference>
<dbReference type="GO" id="GO:0005730">
    <property type="term" value="C:nucleolus"/>
    <property type="evidence" value="ECO:0007669"/>
    <property type="project" value="UniProtKB-SubCell"/>
</dbReference>
<dbReference type="GO" id="GO:0030687">
    <property type="term" value="C:preribosome, large subunit precursor"/>
    <property type="evidence" value="ECO:0007669"/>
    <property type="project" value="EnsemblFungi"/>
</dbReference>
<dbReference type="GO" id="GO:0005524">
    <property type="term" value="F:ATP binding"/>
    <property type="evidence" value="ECO:0007669"/>
    <property type="project" value="UniProtKB-KW"/>
</dbReference>
<dbReference type="GO" id="GO:0016887">
    <property type="term" value="F:ATP hydrolysis activity"/>
    <property type="evidence" value="ECO:0007669"/>
    <property type="project" value="RHEA"/>
</dbReference>
<dbReference type="GO" id="GO:0042802">
    <property type="term" value="F:identical protein binding"/>
    <property type="evidence" value="ECO:0007669"/>
    <property type="project" value="EnsemblFungi"/>
</dbReference>
<dbReference type="GO" id="GO:0003723">
    <property type="term" value="F:RNA binding"/>
    <property type="evidence" value="ECO:0007669"/>
    <property type="project" value="UniProtKB-KW"/>
</dbReference>
<dbReference type="GO" id="GO:0003724">
    <property type="term" value="F:RNA helicase activity"/>
    <property type="evidence" value="ECO:0007669"/>
    <property type="project" value="UniProtKB-EC"/>
</dbReference>
<dbReference type="GO" id="GO:1902626">
    <property type="term" value="P:assembly of large subunit precursor of preribosome"/>
    <property type="evidence" value="ECO:0007669"/>
    <property type="project" value="EnsemblFungi"/>
</dbReference>
<dbReference type="GO" id="GO:0000466">
    <property type="term" value="P:maturation of 5.8S rRNA from tricistronic rRNA transcript (SSU-rRNA, 5.8S rRNA, LSU-rRNA)"/>
    <property type="evidence" value="ECO:0007669"/>
    <property type="project" value="EnsemblFungi"/>
</dbReference>
<dbReference type="GO" id="GO:0000463">
    <property type="term" value="P:maturation of LSU-rRNA from tricistronic rRNA transcript (SSU-rRNA, 5.8S rRNA, LSU-rRNA)"/>
    <property type="evidence" value="ECO:0007669"/>
    <property type="project" value="EnsemblFungi"/>
</dbReference>
<dbReference type="CDD" id="cd17959">
    <property type="entry name" value="DEADc_DDX54"/>
    <property type="match status" value="1"/>
</dbReference>
<dbReference type="CDD" id="cd18787">
    <property type="entry name" value="SF2_C_DEAD"/>
    <property type="match status" value="1"/>
</dbReference>
<dbReference type="FunFam" id="3.40.50.300:FF:000865">
    <property type="entry name" value="ATP-dependent RNA helicase DDX54"/>
    <property type="match status" value="1"/>
</dbReference>
<dbReference type="Gene3D" id="3.40.50.300">
    <property type="entry name" value="P-loop containing nucleotide triphosphate hydrolases"/>
    <property type="match status" value="2"/>
</dbReference>
<dbReference type="InterPro" id="IPR012541">
    <property type="entry name" value="DBP10_C"/>
</dbReference>
<dbReference type="InterPro" id="IPR033517">
    <property type="entry name" value="DDX54/DBP10_DEAD-box_helicase"/>
</dbReference>
<dbReference type="InterPro" id="IPR011545">
    <property type="entry name" value="DEAD/DEAH_box_helicase_dom"/>
</dbReference>
<dbReference type="InterPro" id="IPR050079">
    <property type="entry name" value="DEAD_box_RNA_helicase"/>
</dbReference>
<dbReference type="InterPro" id="IPR014001">
    <property type="entry name" value="Helicase_ATP-bd"/>
</dbReference>
<dbReference type="InterPro" id="IPR001650">
    <property type="entry name" value="Helicase_C-like"/>
</dbReference>
<dbReference type="InterPro" id="IPR027417">
    <property type="entry name" value="P-loop_NTPase"/>
</dbReference>
<dbReference type="InterPro" id="IPR000629">
    <property type="entry name" value="RNA-helicase_DEAD-box_CS"/>
</dbReference>
<dbReference type="InterPro" id="IPR014014">
    <property type="entry name" value="RNA_helicase_DEAD_Q_motif"/>
</dbReference>
<dbReference type="PANTHER" id="PTHR47959">
    <property type="entry name" value="ATP-DEPENDENT RNA HELICASE RHLE-RELATED"/>
    <property type="match status" value="1"/>
</dbReference>
<dbReference type="PANTHER" id="PTHR47959:SF8">
    <property type="entry name" value="RNA HELICASE"/>
    <property type="match status" value="1"/>
</dbReference>
<dbReference type="Pfam" id="PF08147">
    <property type="entry name" value="DBP10CT"/>
    <property type="match status" value="1"/>
</dbReference>
<dbReference type="Pfam" id="PF00270">
    <property type="entry name" value="DEAD"/>
    <property type="match status" value="1"/>
</dbReference>
<dbReference type="Pfam" id="PF00271">
    <property type="entry name" value="Helicase_C"/>
    <property type="match status" value="1"/>
</dbReference>
<dbReference type="SMART" id="SM01123">
    <property type="entry name" value="DBP10CT"/>
    <property type="match status" value="1"/>
</dbReference>
<dbReference type="SMART" id="SM00487">
    <property type="entry name" value="DEXDc"/>
    <property type="match status" value="1"/>
</dbReference>
<dbReference type="SMART" id="SM00490">
    <property type="entry name" value="HELICc"/>
    <property type="match status" value="1"/>
</dbReference>
<dbReference type="SUPFAM" id="SSF52540">
    <property type="entry name" value="P-loop containing nucleoside triphosphate hydrolases"/>
    <property type="match status" value="2"/>
</dbReference>
<dbReference type="PROSITE" id="PS00039">
    <property type="entry name" value="DEAD_ATP_HELICASE"/>
    <property type="match status" value="1"/>
</dbReference>
<dbReference type="PROSITE" id="PS51192">
    <property type="entry name" value="HELICASE_ATP_BIND_1"/>
    <property type="match status" value="1"/>
</dbReference>
<dbReference type="PROSITE" id="PS51194">
    <property type="entry name" value="HELICASE_CTER"/>
    <property type="match status" value="1"/>
</dbReference>
<dbReference type="PROSITE" id="PS51195">
    <property type="entry name" value="Q_MOTIF"/>
    <property type="match status" value="1"/>
</dbReference>
<gene>
    <name type="primary">DBP10</name>
    <name type="ORF">PGUG_04214</name>
</gene>
<organism>
    <name type="scientific">Meyerozyma guilliermondii (strain ATCC 6260 / CBS 566 / DSM 6381 / JCM 1539 / NBRC 10279 / NRRL Y-324)</name>
    <name type="common">Yeast</name>
    <name type="synonym">Candida guilliermondii</name>
    <dbReference type="NCBI Taxonomy" id="294746"/>
    <lineage>
        <taxon>Eukaryota</taxon>
        <taxon>Fungi</taxon>
        <taxon>Dikarya</taxon>
        <taxon>Ascomycota</taxon>
        <taxon>Saccharomycotina</taxon>
        <taxon>Pichiomycetes</taxon>
        <taxon>Debaryomycetaceae</taxon>
        <taxon>Meyerozyma</taxon>
    </lineage>
</organism>
<comment type="function">
    <text evidence="1">ATP-binding RNA helicase involved in the biogenesis of 60S ribosomal subunits and is required for the normal formation of 25S and 5.8S rRNAs.</text>
</comment>
<comment type="catalytic activity">
    <reaction>
        <text>ATP + H2O = ADP + phosphate + H(+)</text>
        <dbReference type="Rhea" id="RHEA:13065"/>
        <dbReference type="ChEBI" id="CHEBI:15377"/>
        <dbReference type="ChEBI" id="CHEBI:15378"/>
        <dbReference type="ChEBI" id="CHEBI:30616"/>
        <dbReference type="ChEBI" id="CHEBI:43474"/>
        <dbReference type="ChEBI" id="CHEBI:456216"/>
        <dbReference type="EC" id="3.6.4.13"/>
    </reaction>
</comment>
<comment type="subcellular location">
    <subcellularLocation>
        <location evidence="1">Nucleus</location>
        <location evidence="1">Nucleolus</location>
    </subcellularLocation>
</comment>
<comment type="domain">
    <text>The Q motif is unique to and characteristic of the DEAD box family of RNA helicases and controls ATP binding and hydrolysis.</text>
</comment>
<comment type="similarity">
    <text evidence="5">Belongs to the DEAD box helicase family. DDX54/DBP10 subfamily.</text>
</comment>
<name>DBP10_PICGU</name>
<evidence type="ECO:0000250" key="1"/>
<evidence type="ECO:0000255" key="2">
    <source>
        <dbReference type="PROSITE-ProRule" id="PRU00541"/>
    </source>
</evidence>
<evidence type="ECO:0000255" key="3">
    <source>
        <dbReference type="PROSITE-ProRule" id="PRU00542"/>
    </source>
</evidence>
<evidence type="ECO:0000256" key="4">
    <source>
        <dbReference type="SAM" id="MobiDB-lite"/>
    </source>
</evidence>
<evidence type="ECO:0000305" key="5"/>
<accession>A5DLR3</accession>
<keyword id="KW-0067">ATP-binding</keyword>
<keyword id="KW-0347">Helicase</keyword>
<keyword id="KW-0378">Hydrolase</keyword>
<keyword id="KW-0547">Nucleotide-binding</keyword>
<keyword id="KW-0539">Nucleus</keyword>
<keyword id="KW-1185">Reference proteome</keyword>
<keyword id="KW-0690">Ribosome biogenesis</keyword>
<keyword id="KW-0694">RNA-binding</keyword>
<keyword id="KW-0698">rRNA processing</keyword>